<sequence>MNIKIVVLVIFAILLGSALAWHGSKHHNPTKAPTEAPHRGGGGGGGHNTPAPTQPPRQNTPAPTFQALNVWFFFWLLLLARAPLTYVHITATSSEPIKLLVPLYVYPGAAWDSVANAAKTGVKIIAIINPNSGPASSGPDSSYTTYMNKLTAAGVDMVGYVHTSYGARAVGDVNADIDTYASKYPGLKGIFLDEASASASEISYYTNVYNHIKSKSGYVNSILNPGTQPDQGYLAISSNIVIFEDAGSNLKNNYASWVKCAPSASQKSGYKYKFSGIAHSTSSGSMSGIINTMVSVLAMGLVYVTDGAAGCCTYNTLTSYLSQEASAVHALN</sequence>
<organism>
    <name type="scientific">Physarum polycephalum</name>
    <name type="common">Slime mold</name>
    <dbReference type="NCBI Taxonomy" id="5791"/>
    <lineage>
        <taxon>Eukaryota</taxon>
        <taxon>Amoebozoa</taxon>
        <taxon>Evosea</taxon>
        <taxon>Eumycetozoa</taxon>
        <taxon>Myxogastria</taxon>
        <taxon>Myxogastromycetidae</taxon>
        <taxon>Physariida</taxon>
        <taxon>Physaraceae</taxon>
        <taxon>Physarum</taxon>
    </lineage>
</organism>
<protein>
    <recommendedName>
        <fullName>Spherulin-4</fullName>
    </recommendedName>
</protein>
<accession>P11113</accession>
<feature type="signal peptide">
    <location>
        <begin position="1"/>
        <end position="22"/>
    </location>
</feature>
<feature type="chain" id="PRO_0000022410" description="Spherulin-4">
    <location>
        <begin position="23"/>
        <end position="332"/>
    </location>
</feature>
<feature type="region of interest" description="Disordered" evidence="1">
    <location>
        <begin position="26"/>
        <end position="60"/>
    </location>
</feature>
<proteinExistence type="evidence at transcript level"/>
<evidence type="ECO:0000256" key="1">
    <source>
        <dbReference type="SAM" id="MobiDB-lite"/>
    </source>
</evidence>
<reference key="1">
    <citation type="journal article" date="1989" name="Biochim. Biophys. Acta">
        <title>Developmentally regulated late mRNAs in the encystment of Physarum polycephalum plasmodia.</title>
        <authorList>
            <person name="Savard L."/>
            <person name="Laroche A."/>
            <person name="Lemieux G."/>
            <person name="Pallotta D."/>
        </authorList>
    </citation>
    <scope>NUCLEOTIDE SEQUENCE [MRNA]</scope>
    <source>
        <strain>M3C</strain>
    </source>
</reference>
<name>SR4_PHYPO</name>
<keyword id="KW-0732">Signal</keyword>
<dbReference type="EMBL" id="X14056">
    <property type="protein sequence ID" value="CAA32212.1"/>
    <property type="molecule type" value="mRNA"/>
</dbReference>
<dbReference type="PIR" id="S03871">
    <property type="entry name" value="S03871"/>
</dbReference>
<dbReference type="SMR" id="P11113"/>
<dbReference type="InterPro" id="IPR021986">
    <property type="entry name" value="Spherulin4"/>
</dbReference>
<dbReference type="PANTHER" id="PTHR35040">
    <property type="match status" value="1"/>
</dbReference>
<dbReference type="PANTHER" id="PTHR35040:SF9">
    <property type="entry name" value="4-LIKE CELL SURFACE PROTEIN, PUTATIVE (AFU_ORTHOLOGUE AFUA_4G14080)-RELATED"/>
    <property type="match status" value="1"/>
</dbReference>
<dbReference type="Pfam" id="PF12138">
    <property type="entry name" value="Spherulin4"/>
    <property type="match status" value="1"/>
</dbReference>